<organism>
    <name type="scientific">Staphylococcus aureus (strain JH9)</name>
    <dbReference type="NCBI Taxonomy" id="359786"/>
    <lineage>
        <taxon>Bacteria</taxon>
        <taxon>Bacillati</taxon>
        <taxon>Bacillota</taxon>
        <taxon>Bacilli</taxon>
        <taxon>Bacillales</taxon>
        <taxon>Staphylococcaceae</taxon>
        <taxon>Staphylococcus</taxon>
    </lineage>
</organism>
<accession>A5IQW9</accession>
<keyword id="KW-0067">ATP-binding</keyword>
<keyword id="KW-0342">GTP-binding</keyword>
<keyword id="KW-0547">Nucleotide-binding</keyword>
<sequence>MDNNEKEKSKSELLVVTGLSGAGKSLVIQCLEDMGYFCVDNLPPVLLPKFVELMEQGNPSLRKVAIAIDLRGKELFNSLVAVVDKVKSESDVIIDVMFLEASTEKLISRYKETRRAHPLMEQGKRSLINAINDEREHLSQIRSIANFVIDTTKLSPKELKERIRRYYEDEEFETFTINVTSFGFKHGIQMDADLVFDVRFLPNPYYVVDLRPLTGLDKDVYNYVMKWKETEIFFEKLTDLLDFMIPGYKKEGKSQLVIAIGCTGGQHRSVALAERLGNYLNEVFEYNVYVHHRDAHIESGEKK</sequence>
<comment type="function">
    <text evidence="1">Displays ATPase and GTPase activities.</text>
</comment>
<comment type="similarity">
    <text evidence="1">Belongs to the RapZ-like family.</text>
</comment>
<proteinExistence type="inferred from homology"/>
<name>Y790_STAA9</name>
<evidence type="ECO:0000255" key="1">
    <source>
        <dbReference type="HAMAP-Rule" id="MF_00636"/>
    </source>
</evidence>
<feature type="chain" id="PRO_1000082668" description="Nucleotide-binding protein SaurJH9_0790">
    <location>
        <begin position="1"/>
        <end position="303"/>
    </location>
</feature>
<feature type="binding site" evidence="1">
    <location>
        <begin position="18"/>
        <end position="25"/>
    </location>
    <ligand>
        <name>ATP</name>
        <dbReference type="ChEBI" id="CHEBI:30616"/>
    </ligand>
</feature>
<feature type="binding site" evidence="1">
    <location>
        <begin position="69"/>
        <end position="72"/>
    </location>
    <ligand>
        <name>GTP</name>
        <dbReference type="ChEBI" id="CHEBI:37565"/>
    </ligand>
</feature>
<gene>
    <name type="ordered locus">SaurJH9_0790</name>
</gene>
<dbReference type="EMBL" id="CP000703">
    <property type="protein sequence ID" value="ABQ48592.1"/>
    <property type="molecule type" value="Genomic_DNA"/>
</dbReference>
<dbReference type="SMR" id="A5IQW9"/>
<dbReference type="KEGG" id="saj:SaurJH9_0790"/>
<dbReference type="HOGENOM" id="CLU_059558_0_0_9"/>
<dbReference type="GO" id="GO:0005524">
    <property type="term" value="F:ATP binding"/>
    <property type="evidence" value="ECO:0007669"/>
    <property type="project" value="UniProtKB-UniRule"/>
</dbReference>
<dbReference type="GO" id="GO:0005525">
    <property type="term" value="F:GTP binding"/>
    <property type="evidence" value="ECO:0007669"/>
    <property type="project" value="UniProtKB-UniRule"/>
</dbReference>
<dbReference type="Gene3D" id="3.40.50.300">
    <property type="entry name" value="P-loop containing nucleotide triphosphate hydrolases"/>
    <property type="match status" value="1"/>
</dbReference>
<dbReference type="HAMAP" id="MF_00636">
    <property type="entry name" value="RapZ_like"/>
    <property type="match status" value="1"/>
</dbReference>
<dbReference type="InterPro" id="IPR027417">
    <property type="entry name" value="P-loop_NTPase"/>
</dbReference>
<dbReference type="InterPro" id="IPR005337">
    <property type="entry name" value="RapZ-like"/>
</dbReference>
<dbReference type="InterPro" id="IPR053930">
    <property type="entry name" value="RapZ-like_N"/>
</dbReference>
<dbReference type="InterPro" id="IPR053931">
    <property type="entry name" value="RapZ_C"/>
</dbReference>
<dbReference type="NCBIfam" id="NF003828">
    <property type="entry name" value="PRK05416.1"/>
    <property type="match status" value="1"/>
</dbReference>
<dbReference type="PANTHER" id="PTHR30448">
    <property type="entry name" value="RNASE ADAPTER PROTEIN RAPZ"/>
    <property type="match status" value="1"/>
</dbReference>
<dbReference type="PANTHER" id="PTHR30448:SF0">
    <property type="entry name" value="RNASE ADAPTER PROTEIN RAPZ"/>
    <property type="match status" value="1"/>
</dbReference>
<dbReference type="Pfam" id="PF22740">
    <property type="entry name" value="PapZ_C"/>
    <property type="match status" value="1"/>
</dbReference>
<dbReference type="Pfam" id="PF03668">
    <property type="entry name" value="RapZ-like_N"/>
    <property type="match status" value="1"/>
</dbReference>
<dbReference type="PIRSF" id="PIRSF005052">
    <property type="entry name" value="P-loopkin"/>
    <property type="match status" value="1"/>
</dbReference>
<dbReference type="SUPFAM" id="SSF52540">
    <property type="entry name" value="P-loop containing nucleoside triphosphate hydrolases"/>
    <property type="match status" value="1"/>
</dbReference>
<protein>
    <recommendedName>
        <fullName evidence="1">Nucleotide-binding protein SaurJH9_0790</fullName>
    </recommendedName>
</protein>
<reference key="1">
    <citation type="submission" date="2007-05" db="EMBL/GenBank/DDBJ databases">
        <title>Complete sequence of chromosome of Staphylococcus aureus subsp. aureus JH9.</title>
        <authorList>
            <consortium name="US DOE Joint Genome Institute"/>
            <person name="Copeland A."/>
            <person name="Lucas S."/>
            <person name="Lapidus A."/>
            <person name="Barry K."/>
            <person name="Detter J.C."/>
            <person name="Glavina del Rio T."/>
            <person name="Hammon N."/>
            <person name="Israni S."/>
            <person name="Pitluck S."/>
            <person name="Chain P."/>
            <person name="Malfatti S."/>
            <person name="Shin M."/>
            <person name="Vergez L."/>
            <person name="Schmutz J."/>
            <person name="Larimer F."/>
            <person name="Land M."/>
            <person name="Hauser L."/>
            <person name="Kyrpides N."/>
            <person name="Kim E."/>
            <person name="Tomasz A."/>
            <person name="Richardson P."/>
        </authorList>
    </citation>
    <scope>NUCLEOTIDE SEQUENCE [LARGE SCALE GENOMIC DNA]</scope>
    <source>
        <strain>JH9</strain>
    </source>
</reference>